<reference key="1">
    <citation type="journal article" date="2010" name="Genome Biol. Evol.">
        <title>Continuing evolution of Burkholderia mallei through genome reduction and large-scale rearrangements.</title>
        <authorList>
            <person name="Losada L."/>
            <person name="Ronning C.M."/>
            <person name="DeShazer D."/>
            <person name="Woods D."/>
            <person name="Fedorova N."/>
            <person name="Kim H.S."/>
            <person name="Shabalina S.A."/>
            <person name="Pearson T.R."/>
            <person name="Brinkac L."/>
            <person name="Tan P."/>
            <person name="Nandi T."/>
            <person name="Crabtree J."/>
            <person name="Badger J."/>
            <person name="Beckstrom-Sternberg S."/>
            <person name="Saqib M."/>
            <person name="Schutzer S.E."/>
            <person name="Keim P."/>
            <person name="Nierman W.C."/>
        </authorList>
    </citation>
    <scope>NUCLEOTIDE SEQUENCE [LARGE SCALE GENOMIC DNA]</scope>
    <source>
        <strain>1106a</strain>
    </source>
</reference>
<keyword id="KW-0963">Cytoplasm</keyword>
<keyword id="KW-0238">DNA-binding</keyword>
<keyword id="KW-0804">Transcription</keyword>
<keyword id="KW-0805">Transcription regulation</keyword>
<gene>
    <name type="ordered locus">BURPS1106A_1240</name>
</gene>
<feature type="chain" id="PRO_1000045285" description="Probable transcriptional regulatory protein BURPS1106A_1240">
    <location>
        <begin position="1"/>
        <end position="242"/>
    </location>
</feature>
<protein>
    <recommendedName>
        <fullName evidence="1">Probable transcriptional regulatory protein BURPS1106A_1240</fullName>
    </recommendedName>
</protein>
<comment type="subcellular location">
    <subcellularLocation>
        <location evidence="1">Cytoplasm</location>
    </subcellularLocation>
</comment>
<comment type="similarity">
    <text evidence="1">Belongs to the TACO1 family.</text>
</comment>
<dbReference type="EMBL" id="CP000572">
    <property type="protein sequence ID" value="ABN91253.1"/>
    <property type="molecule type" value="Genomic_DNA"/>
</dbReference>
<dbReference type="RefSeq" id="WP_004185607.1">
    <property type="nucleotide sequence ID" value="NC_009076.1"/>
</dbReference>
<dbReference type="SMR" id="A3NT48"/>
<dbReference type="KEGG" id="bpl:BURPS1106A_1240"/>
<dbReference type="HOGENOM" id="CLU_062974_2_2_4"/>
<dbReference type="Proteomes" id="UP000006738">
    <property type="component" value="Chromosome I"/>
</dbReference>
<dbReference type="GO" id="GO:0005829">
    <property type="term" value="C:cytosol"/>
    <property type="evidence" value="ECO:0007669"/>
    <property type="project" value="TreeGrafter"/>
</dbReference>
<dbReference type="GO" id="GO:0003677">
    <property type="term" value="F:DNA binding"/>
    <property type="evidence" value="ECO:0007669"/>
    <property type="project" value="UniProtKB-UniRule"/>
</dbReference>
<dbReference type="GO" id="GO:0006355">
    <property type="term" value="P:regulation of DNA-templated transcription"/>
    <property type="evidence" value="ECO:0007669"/>
    <property type="project" value="UniProtKB-UniRule"/>
</dbReference>
<dbReference type="FunFam" id="1.10.10.200:FF:000001">
    <property type="entry name" value="Probable transcriptional regulatory protein YebC"/>
    <property type="match status" value="1"/>
</dbReference>
<dbReference type="FunFam" id="3.30.70.980:FF:000002">
    <property type="entry name" value="Probable transcriptional regulatory protein YebC"/>
    <property type="match status" value="1"/>
</dbReference>
<dbReference type="Gene3D" id="1.10.10.200">
    <property type="match status" value="1"/>
</dbReference>
<dbReference type="Gene3D" id="3.30.70.980">
    <property type="match status" value="2"/>
</dbReference>
<dbReference type="HAMAP" id="MF_00693">
    <property type="entry name" value="Transcrip_reg_TACO1"/>
    <property type="match status" value="1"/>
</dbReference>
<dbReference type="InterPro" id="IPR017856">
    <property type="entry name" value="Integrase-like_N"/>
</dbReference>
<dbReference type="InterPro" id="IPR048300">
    <property type="entry name" value="TACO1_YebC-like_2nd/3rd_dom"/>
</dbReference>
<dbReference type="InterPro" id="IPR049083">
    <property type="entry name" value="TACO1_YebC_N"/>
</dbReference>
<dbReference type="InterPro" id="IPR002876">
    <property type="entry name" value="Transcrip_reg_TACO1-like"/>
</dbReference>
<dbReference type="InterPro" id="IPR026564">
    <property type="entry name" value="Transcrip_reg_TACO1-like_dom3"/>
</dbReference>
<dbReference type="InterPro" id="IPR029072">
    <property type="entry name" value="YebC-like"/>
</dbReference>
<dbReference type="NCBIfam" id="NF001030">
    <property type="entry name" value="PRK00110.1"/>
    <property type="match status" value="1"/>
</dbReference>
<dbReference type="NCBIfam" id="NF009044">
    <property type="entry name" value="PRK12378.1"/>
    <property type="match status" value="1"/>
</dbReference>
<dbReference type="NCBIfam" id="TIGR01033">
    <property type="entry name" value="YebC/PmpR family DNA-binding transcriptional regulator"/>
    <property type="match status" value="1"/>
</dbReference>
<dbReference type="PANTHER" id="PTHR12532:SF6">
    <property type="entry name" value="TRANSCRIPTIONAL REGULATORY PROTEIN YEBC-RELATED"/>
    <property type="match status" value="1"/>
</dbReference>
<dbReference type="PANTHER" id="PTHR12532">
    <property type="entry name" value="TRANSLATIONAL ACTIVATOR OF CYTOCHROME C OXIDASE 1"/>
    <property type="match status" value="1"/>
</dbReference>
<dbReference type="Pfam" id="PF20772">
    <property type="entry name" value="TACO1_YebC_N"/>
    <property type="match status" value="1"/>
</dbReference>
<dbReference type="Pfam" id="PF01709">
    <property type="entry name" value="Transcrip_reg"/>
    <property type="match status" value="1"/>
</dbReference>
<dbReference type="SUPFAM" id="SSF75625">
    <property type="entry name" value="YebC-like"/>
    <property type="match status" value="1"/>
</dbReference>
<sequence length="242" mass="26122">MAGHSKWANIKHKKAAADAKRGKIWTRLIKEIQVAARLGGGDVNSNPRLRLAVDKAADANMPKDNVKRAIDRGVGGADGANYEEIRYEGYGIGGAAIIVDTLTDNRTRTVAEVRHAFSKFGGNMGTDGSVAFMFDHVGQFLFAPGTSEDALMEAALEAGANDVNTNDDGSIEVLCDWQEFSKVKDALEAAGFKAELAEVTMKPQNEVDFTGEDAVKMQKLLDALENLDDVQEVYTNAVVVEE</sequence>
<organism>
    <name type="scientific">Burkholderia pseudomallei (strain 1106a)</name>
    <dbReference type="NCBI Taxonomy" id="357348"/>
    <lineage>
        <taxon>Bacteria</taxon>
        <taxon>Pseudomonadati</taxon>
        <taxon>Pseudomonadota</taxon>
        <taxon>Betaproteobacteria</taxon>
        <taxon>Burkholderiales</taxon>
        <taxon>Burkholderiaceae</taxon>
        <taxon>Burkholderia</taxon>
        <taxon>pseudomallei group</taxon>
    </lineage>
</organism>
<name>Y1240_BURP0</name>
<proteinExistence type="inferred from homology"/>
<accession>A3NT48</accession>
<evidence type="ECO:0000255" key="1">
    <source>
        <dbReference type="HAMAP-Rule" id="MF_00693"/>
    </source>
</evidence>